<name>NU2C1_SOYBN</name>
<proteinExistence type="inferred from homology"/>
<comment type="function">
    <text evidence="1">NDH shuttles electrons from NAD(P)H:plastoquinone, via FMN and iron-sulfur (Fe-S) centers, to quinones in the photosynthetic chain and possibly in a chloroplast respiratory chain. The immediate electron acceptor for the enzyme in this species is believed to be plastoquinone. Couples the redox reaction to proton translocation, and thus conserves the redox energy in a proton gradient.</text>
</comment>
<comment type="catalytic activity">
    <reaction evidence="1">
        <text>a plastoquinone + NADH + (n+1) H(+)(in) = a plastoquinol + NAD(+) + n H(+)(out)</text>
        <dbReference type="Rhea" id="RHEA:42608"/>
        <dbReference type="Rhea" id="RHEA-COMP:9561"/>
        <dbReference type="Rhea" id="RHEA-COMP:9562"/>
        <dbReference type="ChEBI" id="CHEBI:15378"/>
        <dbReference type="ChEBI" id="CHEBI:17757"/>
        <dbReference type="ChEBI" id="CHEBI:57540"/>
        <dbReference type="ChEBI" id="CHEBI:57945"/>
        <dbReference type="ChEBI" id="CHEBI:62192"/>
    </reaction>
</comment>
<comment type="catalytic activity">
    <reaction evidence="1">
        <text>a plastoquinone + NADPH + (n+1) H(+)(in) = a plastoquinol + NADP(+) + n H(+)(out)</text>
        <dbReference type="Rhea" id="RHEA:42612"/>
        <dbReference type="Rhea" id="RHEA-COMP:9561"/>
        <dbReference type="Rhea" id="RHEA-COMP:9562"/>
        <dbReference type="ChEBI" id="CHEBI:15378"/>
        <dbReference type="ChEBI" id="CHEBI:17757"/>
        <dbReference type="ChEBI" id="CHEBI:57783"/>
        <dbReference type="ChEBI" id="CHEBI:58349"/>
        <dbReference type="ChEBI" id="CHEBI:62192"/>
    </reaction>
</comment>
<comment type="subunit">
    <text evidence="1">NDH is composed of at least 16 different subunits, 5 of which are encoded in the nucleus.</text>
</comment>
<comment type="subcellular location">
    <subcellularLocation>
        <location evidence="1">Plastid</location>
        <location evidence="1">Chloroplast thylakoid membrane</location>
        <topology evidence="1">Multi-pass membrane protein</topology>
    </subcellularLocation>
</comment>
<comment type="similarity">
    <text evidence="1">Belongs to the complex I subunit 2 family.</text>
</comment>
<comment type="sequence caution" evidence="2">
    <conflict type="erroneous termination">
        <sequence resource="EMBL-CDS" id="CAA30524"/>
    </conflict>
    <text>Truncated C-terminus.</text>
</comment>
<reference key="1">
    <citation type="journal article" date="2005" name="Plant Mol. Biol.">
        <title>Complete chloroplast genome sequence of Glycine max and comparative analyses with other legume genomes.</title>
        <authorList>
            <person name="Saski C."/>
            <person name="Lee S.-B."/>
            <person name="Daniell H."/>
            <person name="Wood T.C."/>
            <person name="Tomkins J."/>
            <person name="Kim H.-G."/>
            <person name="Jansen R.K."/>
        </authorList>
    </citation>
    <scope>NUCLEOTIDE SEQUENCE [LARGE SCALE GENOMIC DNA]</scope>
    <source>
        <strain>cv. PI 437654</strain>
    </source>
</reference>
<reference key="2">
    <citation type="submission" date="1988-05" db="EMBL/GenBank/DDBJ databases">
        <title>Analysis of the 5' rps12 and 3' rps7 regions of soybean chloroplast DNA including parts of the genes rpl20 and ndhB.</title>
        <authorList>
            <person name="von Allmen J.-M."/>
            <person name="Stutz E."/>
        </authorList>
    </citation>
    <scope>NUCLEOTIDE SEQUENCE [GENOMIC DNA] OF 1-244</scope>
    <source>
        <strain>cv. Maple Arrow</strain>
    </source>
</reference>
<feature type="chain" id="PRO_0000117678" description="NAD(P)H-quinone oxidoreductase subunit 2 A, chloroplastic">
    <location>
        <begin position="1"/>
        <end position="510"/>
    </location>
</feature>
<feature type="transmembrane region" description="Helical" evidence="1">
    <location>
        <begin position="26"/>
        <end position="46"/>
    </location>
</feature>
<feature type="transmembrane region" description="Helical" evidence="1">
    <location>
        <begin position="57"/>
        <end position="77"/>
    </location>
</feature>
<feature type="transmembrane region" description="Helical" evidence="1">
    <location>
        <begin position="99"/>
        <end position="119"/>
    </location>
</feature>
<feature type="transmembrane region" description="Helical" evidence="1">
    <location>
        <begin position="124"/>
        <end position="144"/>
    </location>
</feature>
<feature type="transmembrane region" description="Helical" evidence="1">
    <location>
        <begin position="149"/>
        <end position="169"/>
    </location>
</feature>
<feature type="transmembrane region" description="Helical" evidence="1">
    <location>
        <begin position="183"/>
        <end position="203"/>
    </location>
</feature>
<feature type="transmembrane region" description="Helical" evidence="1">
    <location>
        <begin position="227"/>
        <end position="247"/>
    </location>
</feature>
<feature type="transmembrane region" description="Helical" evidence="1">
    <location>
        <begin position="295"/>
        <end position="315"/>
    </location>
</feature>
<feature type="transmembrane region" description="Helical" evidence="1">
    <location>
        <begin position="323"/>
        <end position="343"/>
    </location>
</feature>
<feature type="transmembrane region" description="Helical" evidence="1">
    <location>
        <begin position="354"/>
        <end position="374"/>
    </location>
</feature>
<feature type="transmembrane region" description="Helical" evidence="1">
    <location>
        <begin position="395"/>
        <end position="415"/>
    </location>
</feature>
<feature type="transmembrane region" description="Helical" evidence="1">
    <location>
        <begin position="418"/>
        <end position="438"/>
    </location>
</feature>
<feature type="transmembrane region" description="Helical" evidence="1">
    <location>
        <begin position="482"/>
        <end position="502"/>
    </location>
</feature>
<accession>P0CC62</accession>
<accession>P10328</accession>
<accession>Q2PMM6</accession>
<protein>
    <recommendedName>
        <fullName evidence="1">NAD(P)H-quinone oxidoreductase subunit 2 A, chloroplastic</fullName>
        <ecNumber evidence="1">7.1.1.-</ecNumber>
    </recommendedName>
    <alternativeName>
        <fullName evidence="1">NAD(P)H dehydrogenase, subunit 2 A</fullName>
    </alternativeName>
    <alternativeName>
        <fullName evidence="1">NADH-plastoquinone oxidoreductase subunit 2 A</fullName>
    </alternativeName>
</protein>
<sequence>MIWHVQNENFILDSTRIFMKAFHLPLFDGSFIFPECILIFGLILLLMIDSTSDQKDISWFYFISSTSLVMSITALLFRWREEPMISFSGNFQTNNFNEIFQFLILLCSTLCIPLSVEYIECTEMAITEFLLFILTATLGGMFLCGANDLITIFVALECFSLCSYLLSGYTKKDVRSNEATTKYLLMGGASSSILVHGFSWLYGSSGGEIELQEIVNGLINTQMYNSPGILIALLFITVGIGFKLSPAPSHQWTPDVYEGSPTPVVAFLSVTSKVAASASATRIFDIPFYFSSNEWHLLLEILAILSMILGNLIAITQTSMKRMLAYSSIGQIGYVIIGIIVGDSNGGYASMITYMLFYISMNLGTFACIVSFGLRTGTDNIRDYAGLYTKDPYLALSLALCLLSLGGLPPLSGFFGKLHLFWCGWQAGLYFLVSIGLLTSVVSIYYYLKIIKLLMTGRNQEITPHVRNYRRPPLRSNNSIELSMIVCVIASTIPGISMNPIIEIAQDTLF</sequence>
<dbReference type="EC" id="7.1.1.-" evidence="1"/>
<dbReference type="EMBL" id="DQ317523">
    <property type="protein sequence ID" value="ABC25184.1"/>
    <property type="molecule type" value="Genomic_DNA"/>
</dbReference>
<dbReference type="EMBL" id="X07675">
    <property type="protein sequence ID" value="CAA30524.1"/>
    <property type="status" value="ALT_SEQ"/>
    <property type="molecule type" value="Genomic_DNA"/>
</dbReference>
<dbReference type="PIR" id="S05719">
    <property type="entry name" value="S05719"/>
</dbReference>
<dbReference type="SMR" id="P0CC62"/>
<dbReference type="FunCoup" id="P0CC62">
    <property type="interactions" value="34"/>
</dbReference>
<dbReference type="STRING" id="3847.P0CC62"/>
<dbReference type="PaxDb" id="3847-GLYMA05G19661.1"/>
<dbReference type="KEGG" id="gmx:3989342"/>
<dbReference type="KEGG" id="gmx:3989377"/>
<dbReference type="eggNOG" id="KOG4668">
    <property type="taxonomic scope" value="Eukaryota"/>
</dbReference>
<dbReference type="InParanoid" id="P0CC62"/>
<dbReference type="Proteomes" id="UP000008827">
    <property type="component" value="Chloroplast"/>
</dbReference>
<dbReference type="GO" id="GO:0009535">
    <property type="term" value="C:chloroplast thylakoid membrane"/>
    <property type="evidence" value="ECO:0007669"/>
    <property type="project" value="UniProtKB-SubCell"/>
</dbReference>
<dbReference type="GO" id="GO:0008137">
    <property type="term" value="F:NADH dehydrogenase (ubiquinone) activity"/>
    <property type="evidence" value="ECO:0007669"/>
    <property type="project" value="InterPro"/>
</dbReference>
<dbReference type="GO" id="GO:0048038">
    <property type="term" value="F:quinone binding"/>
    <property type="evidence" value="ECO:0007669"/>
    <property type="project" value="UniProtKB-KW"/>
</dbReference>
<dbReference type="GO" id="GO:0042773">
    <property type="term" value="P:ATP synthesis coupled electron transport"/>
    <property type="evidence" value="ECO:0007669"/>
    <property type="project" value="InterPro"/>
</dbReference>
<dbReference type="GO" id="GO:0019684">
    <property type="term" value="P:photosynthesis, light reaction"/>
    <property type="evidence" value="ECO:0007669"/>
    <property type="project" value="UniProtKB-UniRule"/>
</dbReference>
<dbReference type="HAMAP" id="MF_00445">
    <property type="entry name" value="NDH1_NuoN_1"/>
    <property type="match status" value="1"/>
</dbReference>
<dbReference type="InterPro" id="IPR010096">
    <property type="entry name" value="NADH-Q_OxRdtase_suN/2"/>
</dbReference>
<dbReference type="InterPro" id="IPR001750">
    <property type="entry name" value="ND/Mrp_TM"/>
</dbReference>
<dbReference type="InterPro" id="IPR045693">
    <property type="entry name" value="Ndh2_N"/>
</dbReference>
<dbReference type="NCBIfam" id="TIGR01770">
    <property type="entry name" value="NDH_I_N"/>
    <property type="match status" value="1"/>
</dbReference>
<dbReference type="NCBIfam" id="NF002701">
    <property type="entry name" value="PRK02504.1"/>
    <property type="match status" value="1"/>
</dbReference>
<dbReference type="PANTHER" id="PTHR22773">
    <property type="entry name" value="NADH DEHYDROGENASE"/>
    <property type="match status" value="1"/>
</dbReference>
<dbReference type="Pfam" id="PF19530">
    <property type="entry name" value="Ndh2_N"/>
    <property type="match status" value="1"/>
</dbReference>
<dbReference type="Pfam" id="PF00361">
    <property type="entry name" value="Proton_antipo_M"/>
    <property type="match status" value="1"/>
</dbReference>
<dbReference type="PRINTS" id="PR01434">
    <property type="entry name" value="NADHDHGNASE5"/>
</dbReference>
<geneLocation type="chloroplast"/>
<organism>
    <name type="scientific">Glycine max</name>
    <name type="common">Soybean</name>
    <name type="synonym">Glycine hispida</name>
    <dbReference type="NCBI Taxonomy" id="3847"/>
    <lineage>
        <taxon>Eukaryota</taxon>
        <taxon>Viridiplantae</taxon>
        <taxon>Streptophyta</taxon>
        <taxon>Embryophyta</taxon>
        <taxon>Tracheophyta</taxon>
        <taxon>Spermatophyta</taxon>
        <taxon>Magnoliopsida</taxon>
        <taxon>eudicotyledons</taxon>
        <taxon>Gunneridae</taxon>
        <taxon>Pentapetalae</taxon>
        <taxon>rosids</taxon>
        <taxon>fabids</taxon>
        <taxon>Fabales</taxon>
        <taxon>Fabaceae</taxon>
        <taxon>Papilionoideae</taxon>
        <taxon>50 kb inversion clade</taxon>
        <taxon>NPAAA clade</taxon>
        <taxon>indigoferoid/millettioid clade</taxon>
        <taxon>Phaseoleae</taxon>
        <taxon>Glycine</taxon>
        <taxon>Glycine subgen. Soja</taxon>
    </lineage>
</organism>
<keyword id="KW-0150">Chloroplast</keyword>
<keyword id="KW-0472">Membrane</keyword>
<keyword id="KW-0520">NAD</keyword>
<keyword id="KW-0521">NADP</keyword>
<keyword id="KW-0934">Plastid</keyword>
<keyword id="KW-0618">Plastoquinone</keyword>
<keyword id="KW-0874">Quinone</keyword>
<keyword id="KW-1185">Reference proteome</keyword>
<keyword id="KW-0793">Thylakoid</keyword>
<keyword id="KW-1278">Translocase</keyword>
<keyword id="KW-0812">Transmembrane</keyword>
<keyword id="KW-1133">Transmembrane helix</keyword>
<keyword id="KW-0813">Transport</keyword>
<gene>
    <name evidence="1" type="primary">ndhB1</name>
</gene>
<evidence type="ECO:0000255" key="1">
    <source>
        <dbReference type="HAMAP-Rule" id="MF_00445"/>
    </source>
</evidence>
<evidence type="ECO:0000305" key="2"/>